<proteinExistence type="evidence at protein level"/>
<reference key="1">
    <citation type="journal article" date="2008" name="Genome Res.">
        <title>Insights from the complete genome sequence of Mycobacterium marinum on the evolution of Mycobacterium tuberculosis.</title>
        <authorList>
            <person name="Stinear T.P."/>
            <person name="Seemann T."/>
            <person name="Harrison P.F."/>
            <person name="Jenkin G.A."/>
            <person name="Davies J.K."/>
            <person name="Johnson P.D."/>
            <person name="Abdellah Z."/>
            <person name="Arrowsmith C."/>
            <person name="Chillingworth T."/>
            <person name="Churcher C."/>
            <person name="Clarke K."/>
            <person name="Cronin A."/>
            <person name="Davis P."/>
            <person name="Goodhead I."/>
            <person name="Holroyd N."/>
            <person name="Jagels K."/>
            <person name="Lord A."/>
            <person name="Moule S."/>
            <person name="Mungall K."/>
            <person name="Norbertczak H."/>
            <person name="Quail M.A."/>
            <person name="Rabbinowitsch E."/>
            <person name="Walker D."/>
            <person name="White B."/>
            <person name="Whitehead S."/>
            <person name="Small P.L."/>
            <person name="Brosch R."/>
            <person name="Ramakrishnan L."/>
            <person name="Fischbach M.A."/>
            <person name="Parkhill J."/>
            <person name="Cole S.T."/>
        </authorList>
    </citation>
    <scope>NUCLEOTIDE SEQUENCE [LARGE SCALE GENOMIC DNA]</scope>
    <source>
        <strain>ATCC BAA-535 / M</strain>
    </source>
</reference>
<reference key="2">
    <citation type="journal article" date="2017" name="Proc. Natl. Acad. Sci. U.S.A.">
        <title>Biosynthesis of isonitrile lipopeptides by conserved nonribosomal peptide synthetase gene clusters in Actinobacteria.</title>
        <authorList>
            <person name="Harris N.C."/>
            <person name="Sato M."/>
            <person name="Herman N.A."/>
            <person name="Twigg F."/>
            <person name="Cai W."/>
            <person name="Liu J."/>
            <person name="Zhu X."/>
            <person name="Downey J."/>
            <person name="Khalaf R."/>
            <person name="Martin J."/>
            <person name="Koshino H."/>
            <person name="Zhang W."/>
        </authorList>
    </citation>
    <scope>FUNCTION</scope>
    <scope>CATALYTIC ACTIVITY</scope>
    <scope>DISRUPTION PHENOTYPE</scope>
    <source>
        <strain>ATCC BAA-535 / M</strain>
    </source>
</reference>
<gene>
    <name evidence="2" type="primary">mmaD</name>
    <name evidence="5" type="ordered locus">MMAR_0259</name>
</gene>
<keyword id="KW-0276">Fatty acid metabolism</keyword>
<keyword id="KW-0443">Lipid metabolism</keyword>
<keyword id="KW-0456">Lyase</keyword>
<keyword id="KW-1185">Reference proteome</keyword>
<sequence>MSTTDLTSPAHAAVESAGTTAIAEDLLARVLEPYSYKGCRYLLDARYHADDDSVLAYGNFTISESAYIRSTGHFNAVELILCFNQLAYSAFAPAVANEEIPQLRGWSLEDYFQHQLASMFIRNSSSRFNRPINPAKFSARLQCRNLQVVQRTWRYLLVPCAIEFWDEDGGAASGEVELAALNIP</sequence>
<evidence type="ECO:0000269" key="1">
    <source>
    </source>
</evidence>
<evidence type="ECO:0000303" key="2">
    <source>
    </source>
</evidence>
<evidence type="ECO:0000305" key="3"/>
<evidence type="ECO:0000305" key="4">
    <source>
    </source>
</evidence>
<evidence type="ECO:0000312" key="5">
    <source>
        <dbReference type="EMBL" id="ACC38727.1"/>
    </source>
</evidence>
<organism>
    <name type="scientific">Mycobacterium marinum (strain ATCC BAA-535 / M)</name>
    <dbReference type="NCBI Taxonomy" id="216594"/>
    <lineage>
        <taxon>Bacteria</taxon>
        <taxon>Bacillati</taxon>
        <taxon>Actinomycetota</taxon>
        <taxon>Actinomycetes</taxon>
        <taxon>Mycobacteriales</taxon>
        <taxon>Mycobacteriaceae</taxon>
        <taxon>Mycobacterium</taxon>
        <taxon>Mycobacterium ulcerans group</taxon>
    </lineage>
</organism>
<feature type="chain" id="PRO_0000458128" description="(2E)-enoyl-[ACP] glycyltransferase">
    <location>
        <begin position="1"/>
        <end position="184"/>
    </location>
</feature>
<protein>
    <recommendedName>
        <fullName evidence="4">(2E)-enoyl-[ACP] glycyltransferase</fullName>
        <ecNumber evidence="1">4.3.2.11</ecNumber>
    </recommendedName>
    <alternativeName>
        <fullName evidence="4">(2E)-unsaturated fatty acyl-[ACP] glycyltransferase</fullName>
    </alternativeName>
</protein>
<name>INLPD_MYCMM</name>
<accession>B2HKM2</accession>
<comment type="function">
    <text evidence="1">Involved in the biosynthesis of a unique class of isonitrile lipopeptides (INLPs) that seem to play a role in metal acquisition in M.marinum. Catalyzes a Michael addition of glycine to the beta-position of an alpha,beta-unsaturated fatty acyl-[ACP], producing a (3R)-3-[(carboxymethyl)amino]fatty acid. Acts on the (2E)-decenoyl moiety loaded on the acyl-carrier protein MmaB, forming the product (3R)-3-[(carboxymethyl)amino]decanoate released from MmaB.</text>
</comment>
<comment type="catalytic activity">
    <reaction evidence="1">
        <text>a (3R)-3-[(carboxymethyl)amino]fatty acid + holo-[ACP] + H(+) = a (2E)-enoyl-[ACP] + glycine + H2O</text>
        <dbReference type="Rhea" id="RHEA:74923"/>
        <dbReference type="Rhea" id="RHEA-COMP:9685"/>
        <dbReference type="Rhea" id="RHEA-COMP:9925"/>
        <dbReference type="ChEBI" id="CHEBI:15377"/>
        <dbReference type="ChEBI" id="CHEBI:15378"/>
        <dbReference type="ChEBI" id="CHEBI:57305"/>
        <dbReference type="ChEBI" id="CHEBI:64479"/>
        <dbReference type="ChEBI" id="CHEBI:78784"/>
        <dbReference type="ChEBI" id="CHEBI:193080"/>
        <dbReference type="EC" id="4.3.2.11"/>
    </reaction>
    <physiologicalReaction direction="right-to-left" evidence="4">
        <dbReference type="Rhea" id="RHEA:74925"/>
    </physiologicalReaction>
</comment>
<comment type="catalytic activity">
    <reaction evidence="1">
        <text>(3R)-3-[(carboxylmethyl)amino]decanoate + holo-[ACP] + H(+) = (2E)-decenoyl-[ACP] + glycine + H2O</text>
        <dbReference type="Rhea" id="RHEA:75543"/>
        <dbReference type="Rhea" id="RHEA-COMP:9639"/>
        <dbReference type="Rhea" id="RHEA-COMP:9685"/>
        <dbReference type="ChEBI" id="CHEBI:15377"/>
        <dbReference type="ChEBI" id="CHEBI:15378"/>
        <dbReference type="ChEBI" id="CHEBI:57305"/>
        <dbReference type="ChEBI" id="CHEBI:64479"/>
        <dbReference type="ChEBI" id="CHEBI:78467"/>
        <dbReference type="ChEBI" id="CHEBI:194341"/>
    </reaction>
    <physiologicalReaction direction="right-to-left" evidence="4">
        <dbReference type="Rhea" id="RHEA:75545"/>
    </physiologicalReaction>
</comment>
<comment type="disruption phenotype">
    <text evidence="1">Deletion of the gene cluster mmaABCDE causes a significant decrease in the intracellular accumulation of zinc in Sauton's medium where metal concentrations are relatively low.</text>
</comment>
<comment type="similarity">
    <text evidence="3">Belongs to the FcoT family.</text>
</comment>
<dbReference type="EC" id="4.3.2.11" evidence="1"/>
<dbReference type="EMBL" id="CP000854">
    <property type="protein sequence ID" value="ACC38727.1"/>
    <property type="molecule type" value="Genomic_DNA"/>
</dbReference>
<dbReference type="RefSeq" id="WP_012392253.1">
    <property type="nucleotide sequence ID" value="NC_010612.1"/>
</dbReference>
<dbReference type="SMR" id="B2HKM2"/>
<dbReference type="STRING" id="216594.MMAR_0259"/>
<dbReference type="GeneID" id="34339725"/>
<dbReference type="KEGG" id="mmi:MMAR_0259"/>
<dbReference type="eggNOG" id="ENOG5032SAE">
    <property type="taxonomic scope" value="Bacteria"/>
</dbReference>
<dbReference type="HOGENOM" id="CLU_124481_0_0_11"/>
<dbReference type="OrthoDB" id="510402at2"/>
<dbReference type="Proteomes" id="UP000001190">
    <property type="component" value="Chromosome"/>
</dbReference>
<dbReference type="GO" id="GO:0016829">
    <property type="term" value="F:lyase activity"/>
    <property type="evidence" value="ECO:0007669"/>
    <property type="project" value="UniProtKB-KW"/>
</dbReference>
<dbReference type="GO" id="GO:0006631">
    <property type="term" value="P:fatty acid metabolic process"/>
    <property type="evidence" value="ECO:0007669"/>
    <property type="project" value="UniProtKB-KW"/>
</dbReference>
<dbReference type="Gene3D" id="3.10.129.30">
    <property type="entry name" value="Rv0098, thioesterase-like hot dog domain"/>
    <property type="match status" value="1"/>
</dbReference>
<dbReference type="InterPro" id="IPR022598">
    <property type="entry name" value="FcoT_ThioEstase"/>
</dbReference>
<dbReference type="InterPro" id="IPR043064">
    <property type="entry name" value="FcoT_ThioEstase_Rv0098-like_sf"/>
</dbReference>
<dbReference type="Pfam" id="PF10862">
    <property type="entry name" value="FcoT"/>
    <property type="match status" value="1"/>
</dbReference>